<feature type="chain" id="PRO_0000147222" description="Dihydroorotase">
    <location>
        <begin position="1"/>
        <end position="342"/>
    </location>
</feature>
<feature type="active site" evidence="1">
    <location>
        <position position="246"/>
    </location>
</feature>
<feature type="binding site" evidence="1">
    <location>
        <position position="13"/>
    </location>
    <ligand>
        <name>Zn(2+)</name>
        <dbReference type="ChEBI" id="CHEBI:29105"/>
        <label>1</label>
    </ligand>
</feature>
<feature type="binding site" evidence="1">
    <location>
        <begin position="15"/>
        <end position="17"/>
    </location>
    <ligand>
        <name>substrate</name>
    </ligand>
</feature>
<feature type="binding site" evidence="1">
    <location>
        <position position="15"/>
    </location>
    <ligand>
        <name>Zn(2+)</name>
        <dbReference type="ChEBI" id="CHEBI:29105"/>
        <label>1</label>
    </ligand>
</feature>
<feature type="binding site" evidence="1">
    <location>
        <position position="41"/>
    </location>
    <ligand>
        <name>substrate</name>
    </ligand>
</feature>
<feature type="binding site" description="via carbamate group" evidence="1">
    <location>
        <position position="98"/>
    </location>
    <ligand>
        <name>Zn(2+)</name>
        <dbReference type="ChEBI" id="CHEBI:29105"/>
        <label>1</label>
    </ligand>
</feature>
<feature type="binding site" description="via carbamate group" evidence="1">
    <location>
        <position position="98"/>
    </location>
    <ligand>
        <name>Zn(2+)</name>
        <dbReference type="ChEBI" id="CHEBI:29105"/>
        <label>2</label>
    </ligand>
</feature>
<feature type="binding site" evidence="1">
    <location>
        <position position="135"/>
    </location>
    <ligand>
        <name>substrate</name>
    </ligand>
</feature>
<feature type="binding site" evidence="1">
    <location>
        <position position="135"/>
    </location>
    <ligand>
        <name>Zn(2+)</name>
        <dbReference type="ChEBI" id="CHEBI:29105"/>
        <label>2</label>
    </ligand>
</feature>
<feature type="binding site" evidence="1">
    <location>
        <position position="173"/>
    </location>
    <ligand>
        <name>Zn(2+)</name>
        <dbReference type="ChEBI" id="CHEBI:29105"/>
        <label>2</label>
    </ligand>
</feature>
<feature type="binding site" evidence="1">
    <location>
        <position position="218"/>
    </location>
    <ligand>
        <name>substrate</name>
    </ligand>
</feature>
<feature type="binding site" evidence="1">
    <location>
        <position position="246"/>
    </location>
    <ligand>
        <name>Zn(2+)</name>
        <dbReference type="ChEBI" id="CHEBI:29105"/>
        <label>1</label>
    </ligand>
</feature>
<feature type="binding site" evidence="1">
    <location>
        <position position="250"/>
    </location>
    <ligand>
        <name>substrate</name>
    </ligand>
</feature>
<feature type="binding site" evidence="1">
    <location>
        <position position="262"/>
    </location>
    <ligand>
        <name>substrate</name>
    </ligand>
</feature>
<feature type="modified residue" description="N6-carboxylysine" evidence="1">
    <location>
        <position position="98"/>
    </location>
</feature>
<evidence type="ECO:0000255" key="1">
    <source>
        <dbReference type="HAMAP-Rule" id="MF_00219"/>
    </source>
</evidence>
<reference key="1">
    <citation type="journal article" date="2003" name="Lancet">
        <title>Genome sequence of Vibrio parahaemolyticus: a pathogenic mechanism distinct from that of V. cholerae.</title>
        <authorList>
            <person name="Makino K."/>
            <person name="Oshima K."/>
            <person name="Kurokawa K."/>
            <person name="Yokoyama K."/>
            <person name="Uda T."/>
            <person name="Tagomori K."/>
            <person name="Iijima Y."/>
            <person name="Najima M."/>
            <person name="Nakano M."/>
            <person name="Yamashita A."/>
            <person name="Kubota Y."/>
            <person name="Kimura S."/>
            <person name="Yasunaga T."/>
            <person name="Honda T."/>
            <person name="Shinagawa H."/>
            <person name="Hattori M."/>
            <person name="Iida T."/>
        </authorList>
    </citation>
    <scope>NUCLEOTIDE SEQUENCE [LARGE SCALE GENOMIC DNA]</scope>
    <source>
        <strain>RIMD 2210633</strain>
    </source>
</reference>
<organism>
    <name type="scientific">Vibrio parahaemolyticus serotype O3:K6 (strain RIMD 2210633)</name>
    <dbReference type="NCBI Taxonomy" id="223926"/>
    <lineage>
        <taxon>Bacteria</taxon>
        <taxon>Pseudomonadati</taxon>
        <taxon>Pseudomonadota</taxon>
        <taxon>Gammaproteobacteria</taxon>
        <taxon>Vibrionales</taxon>
        <taxon>Vibrionaceae</taxon>
        <taxon>Vibrio</taxon>
    </lineage>
</organism>
<name>PYRC_VIBPA</name>
<dbReference type="EC" id="3.5.2.3" evidence="1"/>
<dbReference type="EMBL" id="BA000032">
    <property type="protein sequence ID" value="BAC61750.1"/>
    <property type="molecule type" value="Genomic_DNA"/>
</dbReference>
<dbReference type="RefSeq" id="NP_799917.1">
    <property type="nucleotide sequence ID" value="NC_004605.1"/>
</dbReference>
<dbReference type="RefSeq" id="WP_005480191.1">
    <property type="nucleotide sequence ID" value="NC_004605.1"/>
</dbReference>
<dbReference type="SMR" id="Q87J46"/>
<dbReference type="GeneID" id="1191095"/>
<dbReference type="KEGG" id="vpa:VPA0408"/>
<dbReference type="PATRIC" id="fig|223926.6.peg.3350"/>
<dbReference type="eggNOG" id="COG0418">
    <property type="taxonomic scope" value="Bacteria"/>
</dbReference>
<dbReference type="HOGENOM" id="CLU_041558_1_0_6"/>
<dbReference type="UniPathway" id="UPA00070">
    <property type="reaction ID" value="UER00117"/>
</dbReference>
<dbReference type="Proteomes" id="UP000002493">
    <property type="component" value="Chromosome 2"/>
</dbReference>
<dbReference type="GO" id="GO:0005829">
    <property type="term" value="C:cytosol"/>
    <property type="evidence" value="ECO:0007669"/>
    <property type="project" value="TreeGrafter"/>
</dbReference>
<dbReference type="GO" id="GO:0004151">
    <property type="term" value="F:dihydroorotase activity"/>
    <property type="evidence" value="ECO:0007669"/>
    <property type="project" value="UniProtKB-UniRule"/>
</dbReference>
<dbReference type="GO" id="GO:0008270">
    <property type="term" value="F:zinc ion binding"/>
    <property type="evidence" value="ECO:0007669"/>
    <property type="project" value="UniProtKB-UniRule"/>
</dbReference>
<dbReference type="GO" id="GO:0006207">
    <property type="term" value="P:'de novo' pyrimidine nucleobase biosynthetic process"/>
    <property type="evidence" value="ECO:0007669"/>
    <property type="project" value="TreeGrafter"/>
</dbReference>
<dbReference type="GO" id="GO:0044205">
    <property type="term" value="P:'de novo' UMP biosynthetic process"/>
    <property type="evidence" value="ECO:0007669"/>
    <property type="project" value="UniProtKB-UniRule"/>
</dbReference>
<dbReference type="CDD" id="cd01294">
    <property type="entry name" value="DHOase"/>
    <property type="match status" value="1"/>
</dbReference>
<dbReference type="FunFam" id="3.20.20.140:FF:000006">
    <property type="entry name" value="Dihydroorotase"/>
    <property type="match status" value="1"/>
</dbReference>
<dbReference type="Gene3D" id="3.20.20.140">
    <property type="entry name" value="Metal-dependent hydrolases"/>
    <property type="match status" value="1"/>
</dbReference>
<dbReference type="HAMAP" id="MF_00219">
    <property type="entry name" value="PyrC_classII"/>
    <property type="match status" value="1"/>
</dbReference>
<dbReference type="InterPro" id="IPR006680">
    <property type="entry name" value="Amidohydro-rel"/>
</dbReference>
<dbReference type="InterPro" id="IPR004721">
    <property type="entry name" value="DHOdimr"/>
</dbReference>
<dbReference type="InterPro" id="IPR002195">
    <property type="entry name" value="Dihydroorotase_CS"/>
</dbReference>
<dbReference type="InterPro" id="IPR032466">
    <property type="entry name" value="Metal_Hydrolase"/>
</dbReference>
<dbReference type="NCBIfam" id="TIGR00856">
    <property type="entry name" value="pyrC_dimer"/>
    <property type="match status" value="1"/>
</dbReference>
<dbReference type="PANTHER" id="PTHR43137">
    <property type="entry name" value="DIHYDROOROTASE"/>
    <property type="match status" value="1"/>
</dbReference>
<dbReference type="PANTHER" id="PTHR43137:SF1">
    <property type="entry name" value="DIHYDROOROTASE"/>
    <property type="match status" value="1"/>
</dbReference>
<dbReference type="Pfam" id="PF01979">
    <property type="entry name" value="Amidohydro_1"/>
    <property type="match status" value="1"/>
</dbReference>
<dbReference type="PIRSF" id="PIRSF001237">
    <property type="entry name" value="DHOdimr"/>
    <property type="match status" value="1"/>
</dbReference>
<dbReference type="SUPFAM" id="SSF51556">
    <property type="entry name" value="Metallo-dependent hydrolases"/>
    <property type="match status" value="1"/>
</dbReference>
<dbReference type="PROSITE" id="PS00482">
    <property type="entry name" value="DIHYDROOROTASE_1"/>
    <property type="match status" value="1"/>
</dbReference>
<dbReference type="PROSITE" id="PS00483">
    <property type="entry name" value="DIHYDROOROTASE_2"/>
    <property type="match status" value="1"/>
</dbReference>
<comment type="function">
    <text evidence="1">Catalyzes the reversible cyclization of carbamoyl aspartate to dihydroorotate.</text>
</comment>
<comment type="catalytic activity">
    <reaction evidence="1">
        <text>(S)-dihydroorotate + H2O = N-carbamoyl-L-aspartate + H(+)</text>
        <dbReference type="Rhea" id="RHEA:24296"/>
        <dbReference type="ChEBI" id="CHEBI:15377"/>
        <dbReference type="ChEBI" id="CHEBI:15378"/>
        <dbReference type="ChEBI" id="CHEBI:30864"/>
        <dbReference type="ChEBI" id="CHEBI:32814"/>
        <dbReference type="EC" id="3.5.2.3"/>
    </reaction>
</comment>
<comment type="cofactor">
    <cofactor evidence="1">
        <name>Zn(2+)</name>
        <dbReference type="ChEBI" id="CHEBI:29105"/>
    </cofactor>
    <text evidence="1">Binds 2 Zn(2+) ions per subunit.</text>
</comment>
<comment type="pathway">
    <text evidence="1">Pyrimidine metabolism; UMP biosynthesis via de novo pathway; (S)-dihydroorotate from bicarbonate: step 3/3.</text>
</comment>
<comment type="subunit">
    <text evidence="1">Homodimer.</text>
</comment>
<comment type="similarity">
    <text evidence="1">Belongs to the metallo-dependent hydrolases superfamily. DHOase family. Class II DHOase subfamily.</text>
</comment>
<keyword id="KW-0378">Hydrolase</keyword>
<keyword id="KW-0479">Metal-binding</keyword>
<keyword id="KW-0665">Pyrimidine biosynthesis</keyword>
<keyword id="KW-0862">Zinc</keyword>
<proteinExistence type="inferred from homology"/>
<sequence>MTTLTITRPDDWHVHLRDGEVLKDTVRDISRYNGRALIMPNTVPPVTNTEMALAYRDRILKEQHGEQFEPLMALYLTDNTTPEEIRAAKATGKIVAAKLYPAGATTNSDSGVTDAKNIYHVLEAMEEVGMLLLVHGEVTHHHVDIFDREKEFLDTVLAPIVNDFPNLKIVLEHITTADAAQFVNNASDNVAATITAHHLLFNRNHMLVGGIKPHFYCLPILKRNTHQQALIEAATSGSKKFFLGTDSAPHAKGAKESACGCAGSYTAHAALELYAEVFEKEGKLENLEAFASFNGPDFYGIARNADTVTLEKSAWDVPESMPFGNDIVVPIRANEQIEWKVK</sequence>
<gene>
    <name evidence="1" type="primary">pyrC</name>
    <name type="ordered locus">VPA0408</name>
</gene>
<accession>Q87J46</accession>
<protein>
    <recommendedName>
        <fullName evidence="1">Dihydroorotase</fullName>
        <shortName evidence="1">DHOase</shortName>
        <ecNumber evidence="1">3.5.2.3</ecNumber>
    </recommendedName>
</protein>